<accession>Q9L598</accession>
<dbReference type="EMBL" id="AF254191">
    <property type="protein sequence ID" value="AAF68086.1"/>
    <property type="molecule type" value="Genomic_DNA"/>
</dbReference>
<dbReference type="RefSeq" id="WP_161261379.1">
    <property type="nucleotide sequence ID" value="NZ_JAFBDC010000004.1"/>
</dbReference>
<dbReference type="SMR" id="Q9L598"/>
<dbReference type="OrthoDB" id="9804503at2"/>
<dbReference type="GO" id="GO:0005886">
    <property type="term" value="C:plasma membrane"/>
    <property type="evidence" value="ECO:0007669"/>
    <property type="project" value="UniProtKB-SubCell"/>
</dbReference>
<dbReference type="GO" id="GO:0045158">
    <property type="term" value="F:electron transporter, transferring electrons within cytochrome b6/f complex of photosystem II activity"/>
    <property type="evidence" value="ECO:0007669"/>
    <property type="project" value="UniProtKB-UniRule"/>
</dbReference>
<dbReference type="GO" id="GO:0046872">
    <property type="term" value="F:metal ion binding"/>
    <property type="evidence" value="ECO:0007669"/>
    <property type="project" value="UniProtKB-KW"/>
</dbReference>
<dbReference type="GO" id="GO:0016491">
    <property type="term" value="F:oxidoreductase activity"/>
    <property type="evidence" value="ECO:0007669"/>
    <property type="project" value="InterPro"/>
</dbReference>
<dbReference type="GO" id="GO:0015979">
    <property type="term" value="P:photosynthesis"/>
    <property type="evidence" value="ECO:0007669"/>
    <property type="project" value="UniProtKB-UniRule"/>
</dbReference>
<dbReference type="GO" id="GO:0022904">
    <property type="term" value="P:respiratory electron transport chain"/>
    <property type="evidence" value="ECO:0007669"/>
    <property type="project" value="InterPro"/>
</dbReference>
<dbReference type="CDD" id="cd00284">
    <property type="entry name" value="Cytochrome_b_N"/>
    <property type="match status" value="1"/>
</dbReference>
<dbReference type="Gene3D" id="1.20.810.10">
    <property type="entry name" value="Cytochrome Bc1 Complex, Chain C"/>
    <property type="match status" value="1"/>
</dbReference>
<dbReference type="HAMAP" id="MF_00633">
    <property type="entry name" value="Cytb6_f_cytb6"/>
    <property type="match status" value="1"/>
</dbReference>
<dbReference type="InterPro" id="IPR005797">
    <property type="entry name" value="Cyt_b/b6_N"/>
</dbReference>
<dbReference type="InterPro" id="IPR023530">
    <property type="entry name" value="Cyt_B6_PetB"/>
</dbReference>
<dbReference type="InterPro" id="IPR027387">
    <property type="entry name" value="Cytb/b6-like_sf"/>
</dbReference>
<dbReference type="InterPro" id="IPR048259">
    <property type="entry name" value="Cytochrome_b_N_euk/bac"/>
</dbReference>
<dbReference type="InterPro" id="IPR016174">
    <property type="entry name" value="Di-haem_cyt_TM"/>
</dbReference>
<dbReference type="NCBIfam" id="NF040969">
    <property type="entry name" value="cytb_ExtP"/>
    <property type="match status" value="1"/>
</dbReference>
<dbReference type="PANTHER" id="PTHR19271">
    <property type="entry name" value="CYTOCHROME B"/>
    <property type="match status" value="1"/>
</dbReference>
<dbReference type="PANTHER" id="PTHR19271:SF16">
    <property type="entry name" value="CYTOCHROME B"/>
    <property type="match status" value="1"/>
</dbReference>
<dbReference type="Pfam" id="PF00033">
    <property type="entry name" value="Cytochrome_B"/>
    <property type="match status" value="1"/>
</dbReference>
<dbReference type="PIRSF" id="PIRSF000032">
    <property type="entry name" value="Cytochrome_b6"/>
    <property type="match status" value="1"/>
</dbReference>
<dbReference type="SUPFAM" id="SSF81342">
    <property type="entry name" value="Transmembrane di-heme cytochromes"/>
    <property type="match status" value="1"/>
</dbReference>
<dbReference type="PROSITE" id="PS51002">
    <property type="entry name" value="CYTB_NTER"/>
    <property type="match status" value="1"/>
</dbReference>
<keyword id="KW-1003">Cell membrane</keyword>
<keyword id="KW-0249">Electron transport</keyword>
<keyword id="KW-0349">Heme</keyword>
<keyword id="KW-0408">Iron</keyword>
<keyword id="KW-0472">Membrane</keyword>
<keyword id="KW-0479">Metal-binding</keyword>
<keyword id="KW-0602">Photosynthesis</keyword>
<keyword id="KW-0812">Transmembrane</keyword>
<keyword id="KW-1133">Transmembrane helix</keyword>
<keyword id="KW-0813">Transport</keyword>
<organism>
    <name type="scientific">Heliomicrobium gestii</name>
    <name type="common">Heliobacterium gestii</name>
    <dbReference type="NCBI Taxonomy" id="2699"/>
    <lineage>
        <taxon>Bacteria</taxon>
        <taxon>Bacillati</taxon>
        <taxon>Bacillota</taxon>
        <taxon>Clostridia</taxon>
        <taxon>Eubacteriales</taxon>
        <taxon>Heliobacteriaceae</taxon>
        <taxon>Heliomicrobium</taxon>
    </lineage>
</organism>
<feature type="chain" id="PRO_0000061839" description="Cytochrome b6">
    <location>
        <begin position="1"/>
        <end position="213"/>
    </location>
</feature>
<feature type="transmembrane region" description="Helical" evidence="1">
    <location>
        <begin position="30"/>
        <end position="50"/>
    </location>
</feature>
<feature type="transmembrane region" description="Helical" evidence="1">
    <location>
        <begin position="88"/>
        <end position="108"/>
    </location>
</feature>
<feature type="transmembrane region" description="Helical" evidence="1">
    <location>
        <begin position="114"/>
        <end position="134"/>
    </location>
</feature>
<feature type="transmembrane region" description="Helical" evidence="1">
    <location>
        <begin position="184"/>
        <end position="204"/>
    </location>
</feature>
<feature type="binding site" description="covalent" evidence="1">
    <location>
        <position position="33"/>
    </location>
    <ligand>
        <name>heme c</name>
        <dbReference type="ChEBI" id="CHEBI:61717"/>
    </ligand>
</feature>
<feature type="binding site" description="axial binding residue" evidence="1">
    <location>
        <position position="84"/>
    </location>
    <ligand>
        <name>heme b</name>
        <dbReference type="ChEBI" id="CHEBI:60344"/>
        <label>2</label>
    </ligand>
    <ligandPart>
        <name>Fe</name>
        <dbReference type="ChEBI" id="CHEBI:18248"/>
    </ligandPart>
</feature>
<feature type="binding site" description="axial binding residue" evidence="1">
    <location>
        <position position="98"/>
    </location>
    <ligand>
        <name>heme b</name>
        <dbReference type="ChEBI" id="CHEBI:60344"/>
        <label>1</label>
    </ligand>
    <ligandPart>
        <name>Fe</name>
        <dbReference type="ChEBI" id="CHEBI:18248"/>
    </ligandPart>
</feature>
<feature type="binding site" description="axial binding residue" evidence="1">
    <location>
        <position position="185"/>
    </location>
    <ligand>
        <name>heme b</name>
        <dbReference type="ChEBI" id="CHEBI:60344"/>
        <label>2</label>
    </ligand>
    <ligandPart>
        <name>Fe</name>
        <dbReference type="ChEBI" id="CHEBI:18248"/>
    </ligandPart>
</feature>
<feature type="binding site" description="axial binding residue" evidence="1">
    <location>
        <position position="200"/>
    </location>
    <ligand>
        <name>heme b</name>
        <dbReference type="ChEBI" id="CHEBI:60344"/>
        <label>1</label>
    </ligand>
    <ligandPart>
        <name>Fe</name>
        <dbReference type="ChEBI" id="CHEBI:18248"/>
    </ligandPart>
</feature>
<comment type="function">
    <text evidence="1">Component of the cytochrome bc complex which donates electrons to the photosynthetic reaction center.</text>
</comment>
<comment type="cofactor">
    <cofactor evidence="1">
        <name>heme b</name>
        <dbReference type="ChEBI" id="CHEBI:60344"/>
    </cofactor>
    <text evidence="1">Binds 2 heme b groups non-covalently with two histidine residues as axial ligands.</text>
</comment>
<comment type="cofactor">
    <cofactor evidence="1">
        <name>heme c</name>
        <dbReference type="ChEBI" id="CHEBI:61717"/>
    </cofactor>
    <text evidence="1">Binds one heme group covalently by a single cysteine link with no axial amino acid ligand. This heme was named heme ci.</text>
</comment>
<comment type="subunit">
    <text evidence="1">The subunits of the cytochrome bc complex are a Rieske Fe-S protein (PetC), cytochrome b6 (PetB), subunit IV (PetD), and a diheme cytochrome c (PetX).</text>
</comment>
<comment type="subcellular location">
    <subcellularLocation>
        <location evidence="1">Cell membrane</location>
        <topology evidence="1">Multi-pass membrane protein</topology>
    </subcellularLocation>
</comment>
<comment type="miscellaneous">
    <text evidence="1">Heme 1 (or BH or b566) is high-potential and absorbs at about 566 nm, and heme 2 (or BL or b562) is low-potential and absorbs at about 562 nm.</text>
</comment>
<comment type="similarity">
    <text evidence="1">Belongs to the cytochrome b family. PetB subfamily.</text>
</comment>
<reference key="1">
    <citation type="submission" date="2000-04" db="EMBL/GenBank/DDBJ databases">
        <title>Gene cluster coding for redox proteins of a putative cytochrome bc complex in Heliobacterium gestii.</title>
        <authorList>
            <person name="Albert I."/>
        </authorList>
    </citation>
    <scope>NUCLEOTIDE SEQUENCE [GENOMIC DNA]</scope>
    <source>
        <strain>ATCC 43375 / DSM 11169 / Chainat</strain>
    </source>
</reference>
<name>CYB6_HELGE</name>
<evidence type="ECO:0000255" key="1">
    <source>
        <dbReference type="HAMAP-Rule" id="MF_00633"/>
    </source>
</evidence>
<sequence>MKWLEERFPGIGHVAKDVADHPVPSHTLNIFFCLGGLTLLCFIVQCLTGIFLAFYYKPTPEAAFTSVQMITNEVRFGSVIRSMHHWSCQLMILLVFLHMLRVYYTGAFKRPRELNWVAGCFLLVLSLALAFTGYLLPYEQLSYWASVIGAETANTLPVVGPTLKIMMQGGIKVTAEMLSRFYVLHVMILPAVAIIFLVAHFIMIRVQGISDPM</sequence>
<protein>
    <recommendedName>
        <fullName evidence="1">Cytochrome b6</fullName>
    </recommendedName>
</protein>
<gene>
    <name evidence="1" type="primary">petB</name>
    <name evidence="1" type="synonym">cytB</name>
</gene>
<proteinExistence type="inferred from homology"/>